<sequence>MTTAFYPGSFDPMTNGHLDVLVQALNVASKVIVAIGIHPGKKPLFSFEERAELINRSLADALPKKAADISVVSFDNLVVDAARKHGASLLVRGLRDGTDLDYEMQMAGMNRQMAPDIQTLFLPAGTASRPITATLVRQIASMGGNVSAFVPPAVLEALTGKLKDPAK</sequence>
<accession>B9JFA5</accession>
<protein>
    <recommendedName>
        <fullName evidence="1">Phosphopantetheine adenylyltransferase</fullName>
        <ecNumber evidence="1">2.7.7.3</ecNumber>
    </recommendedName>
    <alternativeName>
        <fullName evidence="1">Dephospho-CoA pyrophosphorylase</fullName>
    </alternativeName>
    <alternativeName>
        <fullName evidence="1">Pantetheine-phosphate adenylyltransferase</fullName>
        <shortName evidence="1">PPAT</shortName>
    </alternativeName>
</protein>
<dbReference type="EC" id="2.7.7.3" evidence="1"/>
<dbReference type="EMBL" id="CP000628">
    <property type="protein sequence ID" value="ACM26595.1"/>
    <property type="molecule type" value="Genomic_DNA"/>
</dbReference>
<dbReference type="RefSeq" id="WP_007696025.1">
    <property type="nucleotide sequence ID" value="NC_011985.1"/>
</dbReference>
<dbReference type="SMR" id="B9JFA5"/>
<dbReference type="STRING" id="311403.Arad_2387"/>
<dbReference type="GeneID" id="86848449"/>
<dbReference type="KEGG" id="ara:Arad_2387"/>
<dbReference type="eggNOG" id="COG0669">
    <property type="taxonomic scope" value="Bacteria"/>
</dbReference>
<dbReference type="HOGENOM" id="CLU_100149_0_1_5"/>
<dbReference type="UniPathway" id="UPA00241">
    <property type="reaction ID" value="UER00355"/>
</dbReference>
<dbReference type="Proteomes" id="UP000001600">
    <property type="component" value="Chromosome 1"/>
</dbReference>
<dbReference type="GO" id="GO:0005737">
    <property type="term" value="C:cytoplasm"/>
    <property type="evidence" value="ECO:0007669"/>
    <property type="project" value="UniProtKB-SubCell"/>
</dbReference>
<dbReference type="GO" id="GO:0005524">
    <property type="term" value="F:ATP binding"/>
    <property type="evidence" value="ECO:0007669"/>
    <property type="project" value="UniProtKB-KW"/>
</dbReference>
<dbReference type="GO" id="GO:0004595">
    <property type="term" value="F:pantetheine-phosphate adenylyltransferase activity"/>
    <property type="evidence" value="ECO:0007669"/>
    <property type="project" value="UniProtKB-UniRule"/>
</dbReference>
<dbReference type="GO" id="GO:0015937">
    <property type="term" value="P:coenzyme A biosynthetic process"/>
    <property type="evidence" value="ECO:0007669"/>
    <property type="project" value="UniProtKB-UniRule"/>
</dbReference>
<dbReference type="CDD" id="cd02163">
    <property type="entry name" value="PPAT"/>
    <property type="match status" value="1"/>
</dbReference>
<dbReference type="Gene3D" id="3.40.50.620">
    <property type="entry name" value="HUPs"/>
    <property type="match status" value="1"/>
</dbReference>
<dbReference type="HAMAP" id="MF_00151">
    <property type="entry name" value="PPAT_bact"/>
    <property type="match status" value="1"/>
</dbReference>
<dbReference type="InterPro" id="IPR004821">
    <property type="entry name" value="Cyt_trans-like"/>
</dbReference>
<dbReference type="InterPro" id="IPR001980">
    <property type="entry name" value="PPAT"/>
</dbReference>
<dbReference type="InterPro" id="IPR014729">
    <property type="entry name" value="Rossmann-like_a/b/a_fold"/>
</dbReference>
<dbReference type="NCBIfam" id="TIGR01510">
    <property type="entry name" value="coaD_prev_kdtB"/>
    <property type="match status" value="1"/>
</dbReference>
<dbReference type="NCBIfam" id="TIGR00125">
    <property type="entry name" value="cyt_tran_rel"/>
    <property type="match status" value="1"/>
</dbReference>
<dbReference type="PANTHER" id="PTHR21342">
    <property type="entry name" value="PHOSPHOPANTETHEINE ADENYLYLTRANSFERASE"/>
    <property type="match status" value="1"/>
</dbReference>
<dbReference type="PANTHER" id="PTHR21342:SF1">
    <property type="entry name" value="PHOSPHOPANTETHEINE ADENYLYLTRANSFERASE"/>
    <property type="match status" value="1"/>
</dbReference>
<dbReference type="Pfam" id="PF01467">
    <property type="entry name" value="CTP_transf_like"/>
    <property type="match status" value="1"/>
</dbReference>
<dbReference type="PRINTS" id="PR01020">
    <property type="entry name" value="LPSBIOSNTHSS"/>
</dbReference>
<dbReference type="SUPFAM" id="SSF52374">
    <property type="entry name" value="Nucleotidylyl transferase"/>
    <property type="match status" value="1"/>
</dbReference>
<gene>
    <name evidence="1" type="primary">coaD</name>
    <name type="ordered locus">Arad_2387</name>
</gene>
<evidence type="ECO:0000255" key="1">
    <source>
        <dbReference type="HAMAP-Rule" id="MF_00151"/>
    </source>
</evidence>
<proteinExistence type="inferred from homology"/>
<organism>
    <name type="scientific">Rhizobium rhizogenes (strain K84 / ATCC BAA-868)</name>
    <name type="common">Agrobacterium radiobacter</name>
    <dbReference type="NCBI Taxonomy" id="311403"/>
    <lineage>
        <taxon>Bacteria</taxon>
        <taxon>Pseudomonadati</taxon>
        <taxon>Pseudomonadota</taxon>
        <taxon>Alphaproteobacteria</taxon>
        <taxon>Hyphomicrobiales</taxon>
        <taxon>Rhizobiaceae</taxon>
        <taxon>Rhizobium/Agrobacterium group</taxon>
        <taxon>Rhizobium</taxon>
    </lineage>
</organism>
<comment type="function">
    <text evidence="1">Reversibly transfers an adenylyl group from ATP to 4'-phosphopantetheine, yielding dephospho-CoA (dPCoA) and pyrophosphate.</text>
</comment>
<comment type="catalytic activity">
    <reaction evidence="1">
        <text>(R)-4'-phosphopantetheine + ATP + H(+) = 3'-dephospho-CoA + diphosphate</text>
        <dbReference type="Rhea" id="RHEA:19801"/>
        <dbReference type="ChEBI" id="CHEBI:15378"/>
        <dbReference type="ChEBI" id="CHEBI:30616"/>
        <dbReference type="ChEBI" id="CHEBI:33019"/>
        <dbReference type="ChEBI" id="CHEBI:57328"/>
        <dbReference type="ChEBI" id="CHEBI:61723"/>
        <dbReference type="EC" id="2.7.7.3"/>
    </reaction>
</comment>
<comment type="cofactor">
    <cofactor evidence="1">
        <name>Mg(2+)</name>
        <dbReference type="ChEBI" id="CHEBI:18420"/>
    </cofactor>
</comment>
<comment type="pathway">
    <text evidence="1">Cofactor biosynthesis; coenzyme A biosynthesis; CoA from (R)-pantothenate: step 4/5.</text>
</comment>
<comment type="subunit">
    <text evidence="1">Homohexamer.</text>
</comment>
<comment type="subcellular location">
    <subcellularLocation>
        <location evidence="1">Cytoplasm</location>
    </subcellularLocation>
</comment>
<comment type="similarity">
    <text evidence="1">Belongs to the bacterial CoaD family.</text>
</comment>
<reference key="1">
    <citation type="journal article" date="2009" name="J. Bacteriol.">
        <title>Genome sequences of three Agrobacterium biovars help elucidate the evolution of multichromosome genomes in bacteria.</title>
        <authorList>
            <person name="Slater S.C."/>
            <person name="Goldman B.S."/>
            <person name="Goodner B."/>
            <person name="Setubal J.C."/>
            <person name="Farrand S.K."/>
            <person name="Nester E.W."/>
            <person name="Burr T.J."/>
            <person name="Banta L."/>
            <person name="Dickerman A.W."/>
            <person name="Paulsen I."/>
            <person name="Otten L."/>
            <person name="Suen G."/>
            <person name="Welch R."/>
            <person name="Almeida N.F."/>
            <person name="Arnold F."/>
            <person name="Burton O.T."/>
            <person name="Du Z."/>
            <person name="Ewing A."/>
            <person name="Godsy E."/>
            <person name="Heisel S."/>
            <person name="Houmiel K.L."/>
            <person name="Jhaveri J."/>
            <person name="Lu J."/>
            <person name="Miller N.M."/>
            <person name="Norton S."/>
            <person name="Chen Q."/>
            <person name="Phoolcharoen W."/>
            <person name="Ohlin V."/>
            <person name="Ondrusek D."/>
            <person name="Pride N."/>
            <person name="Stricklin S.L."/>
            <person name="Sun J."/>
            <person name="Wheeler C."/>
            <person name="Wilson L."/>
            <person name="Zhu H."/>
            <person name="Wood D.W."/>
        </authorList>
    </citation>
    <scope>NUCLEOTIDE SEQUENCE [LARGE SCALE GENOMIC DNA]</scope>
    <source>
        <strain>K84 / ATCC BAA-868</strain>
    </source>
</reference>
<feature type="chain" id="PRO_1000123255" description="Phosphopantetheine adenylyltransferase">
    <location>
        <begin position="1"/>
        <end position="167"/>
    </location>
</feature>
<feature type="binding site" evidence="1">
    <location>
        <begin position="9"/>
        <end position="10"/>
    </location>
    <ligand>
        <name>ATP</name>
        <dbReference type="ChEBI" id="CHEBI:30616"/>
    </ligand>
</feature>
<feature type="binding site" evidence="1">
    <location>
        <position position="9"/>
    </location>
    <ligand>
        <name>substrate</name>
    </ligand>
</feature>
<feature type="binding site" evidence="1">
    <location>
        <position position="17"/>
    </location>
    <ligand>
        <name>ATP</name>
        <dbReference type="ChEBI" id="CHEBI:30616"/>
    </ligand>
</feature>
<feature type="binding site" evidence="1">
    <location>
        <position position="41"/>
    </location>
    <ligand>
        <name>substrate</name>
    </ligand>
</feature>
<feature type="binding site" evidence="1">
    <location>
        <position position="78"/>
    </location>
    <ligand>
        <name>substrate</name>
    </ligand>
</feature>
<feature type="binding site" evidence="1">
    <location>
        <position position="92"/>
    </location>
    <ligand>
        <name>substrate</name>
    </ligand>
</feature>
<feature type="binding site" evidence="1">
    <location>
        <begin position="93"/>
        <end position="95"/>
    </location>
    <ligand>
        <name>ATP</name>
        <dbReference type="ChEBI" id="CHEBI:30616"/>
    </ligand>
</feature>
<feature type="binding site" evidence="1">
    <location>
        <position position="103"/>
    </location>
    <ligand>
        <name>ATP</name>
        <dbReference type="ChEBI" id="CHEBI:30616"/>
    </ligand>
</feature>
<feature type="binding site" evidence="1">
    <location>
        <begin position="128"/>
        <end position="134"/>
    </location>
    <ligand>
        <name>ATP</name>
        <dbReference type="ChEBI" id="CHEBI:30616"/>
    </ligand>
</feature>
<feature type="site" description="Transition state stabilizer" evidence="1">
    <location>
        <position position="17"/>
    </location>
</feature>
<name>COAD_RHIR8</name>
<keyword id="KW-0067">ATP-binding</keyword>
<keyword id="KW-0173">Coenzyme A biosynthesis</keyword>
<keyword id="KW-0963">Cytoplasm</keyword>
<keyword id="KW-0460">Magnesium</keyword>
<keyword id="KW-0547">Nucleotide-binding</keyword>
<keyword id="KW-0548">Nucleotidyltransferase</keyword>
<keyword id="KW-0808">Transferase</keyword>